<evidence type="ECO:0000255" key="1">
    <source>
        <dbReference type="HAMAP-Rule" id="MF_01240"/>
    </source>
</evidence>
<accession>C1KZJ2</accession>
<organism>
    <name type="scientific">Listeria monocytogenes serotype 4b (strain CLIP80459)</name>
    <dbReference type="NCBI Taxonomy" id="568819"/>
    <lineage>
        <taxon>Bacteria</taxon>
        <taxon>Bacillati</taxon>
        <taxon>Bacillota</taxon>
        <taxon>Bacilli</taxon>
        <taxon>Bacillales</taxon>
        <taxon>Listeriaceae</taxon>
        <taxon>Listeria</taxon>
    </lineage>
</organism>
<protein>
    <recommendedName>
        <fullName evidence="1">UPF0309 protein Lm4b_02611</fullName>
    </recommendedName>
</protein>
<dbReference type="EMBL" id="FM242711">
    <property type="protein sequence ID" value="CAS06365.1"/>
    <property type="molecule type" value="Genomic_DNA"/>
</dbReference>
<dbReference type="RefSeq" id="WP_003727687.1">
    <property type="nucleotide sequence ID" value="NC_012488.1"/>
</dbReference>
<dbReference type="SMR" id="C1KZJ2"/>
<dbReference type="KEGG" id="lmc:Lm4b_02611"/>
<dbReference type="HOGENOM" id="CLU_089975_0_0_9"/>
<dbReference type="GO" id="GO:0097367">
    <property type="term" value="F:carbohydrate derivative binding"/>
    <property type="evidence" value="ECO:0007669"/>
    <property type="project" value="InterPro"/>
</dbReference>
<dbReference type="GO" id="GO:1901135">
    <property type="term" value="P:carbohydrate derivative metabolic process"/>
    <property type="evidence" value="ECO:0007669"/>
    <property type="project" value="InterPro"/>
</dbReference>
<dbReference type="CDD" id="cd05013">
    <property type="entry name" value="SIS_RpiR"/>
    <property type="match status" value="1"/>
</dbReference>
<dbReference type="Gene3D" id="3.40.50.10490">
    <property type="entry name" value="Glucose-6-phosphate isomerase like protein, domain 1"/>
    <property type="match status" value="1"/>
</dbReference>
<dbReference type="HAMAP" id="MF_01240">
    <property type="entry name" value="UPF0309"/>
    <property type="match status" value="1"/>
</dbReference>
<dbReference type="InterPro" id="IPR035472">
    <property type="entry name" value="RpiR-like_SIS"/>
</dbReference>
<dbReference type="InterPro" id="IPR001347">
    <property type="entry name" value="SIS_dom"/>
</dbReference>
<dbReference type="InterPro" id="IPR046348">
    <property type="entry name" value="SIS_dom_sf"/>
</dbReference>
<dbReference type="InterPro" id="IPR050099">
    <property type="entry name" value="SIS_GmhA/DiaA_subfam"/>
</dbReference>
<dbReference type="InterPro" id="IPR022951">
    <property type="entry name" value="UPF0309"/>
</dbReference>
<dbReference type="NCBIfam" id="NF002805">
    <property type="entry name" value="PRK02947.1"/>
    <property type="match status" value="1"/>
</dbReference>
<dbReference type="PANTHER" id="PTHR30390:SF7">
    <property type="entry name" value="PHOSPHOHEPTOSE ISOMERASE"/>
    <property type="match status" value="1"/>
</dbReference>
<dbReference type="PANTHER" id="PTHR30390">
    <property type="entry name" value="SEDOHEPTULOSE 7-PHOSPHATE ISOMERASE / DNAA INITIATOR-ASSOCIATING FACTOR FOR REPLICATION INITIATION"/>
    <property type="match status" value="1"/>
</dbReference>
<dbReference type="Pfam" id="PF13580">
    <property type="entry name" value="SIS_2"/>
    <property type="match status" value="1"/>
</dbReference>
<dbReference type="SUPFAM" id="SSF53697">
    <property type="entry name" value="SIS domain"/>
    <property type="match status" value="1"/>
</dbReference>
<dbReference type="PROSITE" id="PS51464">
    <property type="entry name" value="SIS"/>
    <property type="match status" value="1"/>
</dbReference>
<feature type="chain" id="PRO_1000214077" description="UPF0309 protein Lm4b_02611">
    <location>
        <begin position="1"/>
        <end position="247"/>
    </location>
</feature>
<feature type="domain" description="SIS" evidence="1">
    <location>
        <begin position="31"/>
        <end position="214"/>
    </location>
</feature>
<comment type="similarity">
    <text evidence="1">Belongs to the UPF0309 family.</text>
</comment>
<gene>
    <name type="ordered locus">Lm4b_02611</name>
</gene>
<name>Y2611_LISMC</name>
<sequence>MINNYIDITVRLLENILDNEADYVKEAGAKVAESIENDGVIHLFGCGHSHILTEEVFYRAGGLAAIHPILHEPLMLHEGAAASSVLERKNDYAKTFMAEEDIRPGDIMIVLSTSGRNPVPIDVAEIAREKGAFVIVITSLQYSASQKSRHTSGKRLSDAGDIVIDNGAVKGDAVLKSANFDIAFAPTSTVTGAVILQSIFAEAIETMVNDNFTPPVFISGNVENADAHNQALVDKYNERIPLLGMNL</sequence>
<proteinExistence type="inferred from homology"/>
<reference key="1">
    <citation type="journal article" date="2012" name="BMC Genomics">
        <title>Comparative genomics and transcriptomics of lineages I, II, and III strains of Listeria monocytogenes.</title>
        <authorList>
            <person name="Hain T."/>
            <person name="Ghai R."/>
            <person name="Billion A."/>
            <person name="Kuenne C.T."/>
            <person name="Steinweg C."/>
            <person name="Izar B."/>
            <person name="Mohamed W."/>
            <person name="Mraheil M."/>
            <person name="Domann E."/>
            <person name="Schaffrath S."/>
            <person name="Karst U."/>
            <person name="Goesmann A."/>
            <person name="Oehm S."/>
            <person name="Puhler A."/>
            <person name="Merkl R."/>
            <person name="Vorwerk S."/>
            <person name="Glaser P."/>
            <person name="Garrido P."/>
            <person name="Rusniok C."/>
            <person name="Buchrieser C."/>
            <person name="Goebel W."/>
            <person name="Chakraborty T."/>
        </authorList>
    </citation>
    <scope>NUCLEOTIDE SEQUENCE [LARGE SCALE GENOMIC DNA]</scope>
    <source>
        <strain>CLIP80459</strain>
    </source>
</reference>